<sequence>MYAILAEKPSAAKAYAQALNGKRQGRIYVAPPSSLLPEGALICAAVGHILEFLEPGELNEKYKSYSLDSLPIIIDLFQYKVVSDKKEVLQRIKDTIFDKRVKTIILATDAAAEGEYIGRNILYRLQCKKTIKRLWTSSMTATSIQKAFSQLKADAETLPLYYQAKARAESDYMIGLTLSRAYGILLKEQGIVPHNTTISLGRVQTPLLAEIVKRERLIEQFTAENFWTVKATFNNQGNVYEGEWFHEKENRIFKEEQAEQLCELVRNQSSTIMEMKEEMRTYQPPLLYXLSTLQMDAGNAFGFKPAETLKYAQSLYDKGYLSYPRTQDERITESDARELENNIQFLSGHDTFGALFPLPVSTLMNNKRYIGEVTDHHALLITDKIPKDKDLSEDEKSIYHLVVKRILAAHYPDVAMSHKEIITKVMDRFTFRSKGKELLSKGWHHIIPPTNENDIMLPTLLKGSEGVVTDTLTTKSKTKPPNRYTSSSLIGFMKNAAQAIEDEDRKSISNLPLGTEATRAGLITLLESRKYIEWKKNKVYPTLLGITVVDSIKRGSVIKSPILTAKWDVKLNEIGASLYNHKDFIAHSKKLSSVLFEEVKTYSSTWNQNGVERIKSESIGACLLCGSNVVLRKGKHGEFYGCSNYKDSGCTFNLPFKVLNKKLSKKQLMELLKNEKTDIIKGFKWKDKTFNAPLVWNREDQKVQFGK</sequence>
<geneLocation type="plasmid">
    <name>pBpOF4-01</name>
</geneLocation>
<dbReference type="EC" id="5.6.2.1" evidence="4"/>
<dbReference type="EMBL" id="CP001879">
    <property type="protein sequence ID" value="ADC52251.1"/>
    <property type="status" value="ALT_SEQ"/>
    <property type="molecule type" value="Genomic_DNA"/>
</dbReference>
<dbReference type="EMBL" id="CP001879">
    <property type="protein sequence ID" value="ADC52252.1"/>
    <property type="status" value="ALT_INIT"/>
    <property type="molecule type" value="Genomic_DNA"/>
</dbReference>
<dbReference type="EMBL" id="Z14112">
    <property type="protein sequence ID" value="CAA78484.1"/>
    <property type="status" value="ALT_SEQ"/>
    <property type="molecule type" value="Genomic_DNA"/>
</dbReference>
<dbReference type="EMBL" id="Z14112">
    <property type="protein sequence ID" value="CAA78485.1"/>
    <property type="status" value="ALT_SEQ"/>
    <property type="molecule type" value="Genomic_DNA"/>
</dbReference>
<dbReference type="PIR" id="S23866">
    <property type="entry name" value="S23866"/>
</dbReference>
<dbReference type="KEGG" id="bpf:BpOF4_21279"/>
<dbReference type="KEGG" id="bpf:BpOF4_21284"/>
<dbReference type="eggNOG" id="COG0550">
    <property type="taxonomic scope" value="Bacteria"/>
</dbReference>
<dbReference type="HOGENOM" id="CLU_002929_5_0_9"/>
<dbReference type="Proteomes" id="UP000001544">
    <property type="component" value="Plasmid pBpOF4-01"/>
</dbReference>
<dbReference type="GO" id="GO:0043597">
    <property type="term" value="C:cytoplasmic replication fork"/>
    <property type="evidence" value="ECO:0007669"/>
    <property type="project" value="TreeGrafter"/>
</dbReference>
<dbReference type="GO" id="GO:0003677">
    <property type="term" value="F:DNA binding"/>
    <property type="evidence" value="ECO:0007669"/>
    <property type="project" value="UniProtKB-KW"/>
</dbReference>
<dbReference type="GO" id="GO:0003917">
    <property type="term" value="F:DNA topoisomerase type I (single strand cut, ATP-independent) activity"/>
    <property type="evidence" value="ECO:0007669"/>
    <property type="project" value="UniProtKB-EC"/>
</dbReference>
<dbReference type="GO" id="GO:0006310">
    <property type="term" value="P:DNA recombination"/>
    <property type="evidence" value="ECO:0007669"/>
    <property type="project" value="TreeGrafter"/>
</dbReference>
<dbReference type="GO" id="GO:0006281">
    <property type="term" value="P:DNA repair"/>
    <property type="evidence" value="ECO:0007669"/>
    <property type="project" value="TreeGrafter"/>
</dbReference>
<dbReference type="GO" id="GO:0006265">
    <property type="term" value="P:DNA topological change"/>
    <property type="evidence" value="ECO:0007669"/>
    <property type="project" value="InterPro"/>
</dbReference>
<dbReference type="CDD" id="cd03362">
    <property type="entry name" value="TOPRIM_TopoIA_TopoIII"/>
    <property type="match status" value="1"/>
</dbReference>
<dbReference type="Gene3D" id="3.40.50.140">
    <property type="match status" value="1"/>
</dbReference>
<dbReference type="Gene3D" id="3.30.65.10">
    <property type="entry name" value="Bacterial Topoisomerase I, domain 1"/>
    <property type="match status" value="1"/>
</dbReference>
<dbReference type="Gene3D" id="1.10.460.10">
    <property type="entry name" value="Topoisomerase I, domain 2"/>
    <property type="match status" value="1"/>
</dbReference>
<dbReference type="Gene3D" id="2.70.20.10">
    <property type="entry name" value="Topoisomerase I, domain 3"/>
    <property type="match status" value="1"/>
</dbReference>
<dbReference type="Gene3D" id="1.10.290.10">
    <property type="entry name" value="Topoisomerase I, domain 4"/>
    <property type="match status" value="1"/>
</dbReference>
<dbReference type="InterPro" id="IPR000380">
    <property type="entry name" value="Topo_IA"/>
</dbReference>
<dbReference type="InterPro" id="IPR003601">
    <property type="entry name" value="Topo_IA_2"/>
</dbReference>
<dbReference type="InterPro" id="IPR023406">
    <property type="entry name" value="Topo_IA_AS"/>
</dbReference>
<dbReference type="InterPro" id="IPR013497">
    <property type="entry name" value="Topo_IA_cen"/>
</dbReference>
<dbReference type="InterPro" id="IPR013824">
    <property type="entry name" value="Topo_IA_cen_sub1"/>
</dbReference>
<dbReference type="InterPro" id="IPR013825">
    <property type="entry name" value="Topo_IA_cen_sub2"/>
</dbReference>
<dbReference type="InterPro" id="IPR013826">
    <property type="entry name" value="Topo_IA_cen_sub3"/>
</dbReference>
<dbReference type="InterPro" id="IPR023405">
    <property type="entry name" value="Topo_IA_core_domain"/>
</dbReference>
<dbReference type="InterPro" id="IPR003602">
    <property type="entry name" value="Topo_IA_DNA-bd_dom"/>
</dbReference>
<dbReference type="InterPro" id="IPR025589">
    <property type="entry name" value="Toprim_C_rpt"/>
</dbReference>
<dbReference type="InterPro" id="IPR006171">
    <property type="entry name" value="TOPRIM_dom"/>
</dbReference>
<dbReference type="InterPro" id="IPR034144">
    <property type="entry name" value="TOPRIM_TopoIII"/>
</dbReference>
<dbReference type="PANTHER" id="PTHR11390:SF21">
    <property type="entry name" value="DNA TOPOISOMERASE 3-ALPHA"/>
    <property type="match status" value="1"/>
</dbReference>
<dbReference type="PANTHER" id="PTHR11390">
    <property type="entry name" value="PROKARYOTIC DNA TOPOISOMERASE"/>
    <property type="match status" value="1"/>
</dbReference>
<dbReference type="Pfam" id="PF01131">
    <property type="entry name" value="Topoisom_bac"/>
    <property type="match status" value="1"/>
</dbReference>
<dbReference type="Pfam" id="PF01751">
    <property type="entry name" value="Toprim"/>
    <property type="match status" value="1"/>
</dbReference>
<dbReference type="Pfam" id="PF13342">
    <property type="entry name" value="Toprim_Crpt"/>
    <property type="match status" value="1"/>
</dbReference>
<dbReference type="PRINTS" id="PR00417">
    <property type="entry name" value="PRTPISMRASEI"/>
</dbReference>
<dbReference type="SMART" id="SM00437">
    <property type="entry name" value="TOP1Ac"/>
    <property type="match status" value="1"/>
</dbReference>
<dbReference type="SMART" id="SM00436">
    <property type="entry name" value="TOP1Bc"/>
    <property type="match status" value="1"/>
</dbReference>
<dbReference type="SMART" id="SM00493">
    <property type="entry name" value="TOPRIM"/>
    <property type="match status" value="1"/>
</dbReference>
<dbReference type="SUPFAM" id="SSF56712">
    <property type="entry name" value="Prokaryotic type I DNA topoisomerase"/>
    <property type="match status" value="1"/>
</dbReference>
<dbReference type="SUPFAM" id="SSF57783">
    <property type="entry name" value="Zinc beta-ribbon"/>
    <property type="match status" value="1"/>
</dbReference>
<dbReference type="PROSITE" id="PS00396">
    <property type="entry name" value="TOPO_IA_1"/>
    <property type="match status" value="1"/>
</dbReference>
<dbReference type="PROSITE" id="PS52039">
    <property type="entry name" value="TOPO_IA_2"/>
    <property type="match status" value="1"/>
</dbReference>
<dbReference type="PROSITE" id="PS50880">
    <property type="entry name" value="TOPRIM"/>
    <property type="match status" value="1"/>
</dbReference>
<evidence type="ECO:0000250" key="1"/>
<evidence type="ECO:0000255" key="2">
    <source>
        <dbReference type="PROSITE-ProRule" id="PRU00995"/>
    </source>
</evidence>
<evidence type="ECO:0000255" key="3">
    <source>
        <dbReference type="PROSITE-ProRule" id="PRU01383"/>
    </source>
</evidence>
<evidence type="ECO:0000255" key="4">
    <source>
        <dbReference type="PROSITE-ProRule" id="PRU10131"/>
    </source>
</evidence>
<evidence type="ECO:0000305" key="5"/>
<feature type="chain" id="PRO_0000145140" description="DNA topoisomerase 1">
    <location>
        <begin position="1"/>
        <end position="706"/>
    </location>
</feature>
<feature type="domain" description="Toprim" evidence="2">
    <location>
        <begin position="1"/>
        <end position="140"/>
    </location>
</feature>
<feature type="domain" description="Topo IA-type catalytic" evidence="3">
    <location>
        <begin position="157"/>
        <end position="596"/>
    </location>
</feature>
<feature type="region of interest" description="Interaction with DNA" evidence="1">
    <location>
        <begin position="199"/>
        <end position="204"/>
    </location>
</feature>
<feature type="active site" description="O-(5'-phospho-DNA)-tyrosine intermediate" evidence="3">
    <location>
        <position position="323"/>
    </location>
</feature>
<feature type="site" description="Interaction with DNA" evidence="2">
    <location>
        <position position="48"/>
    </location>
</feature>
<feature type="site" description="Interaction with DNA" evidence="2">
    <location>
        <position position="167"/>
    </location>
</feature>
<feature type="site" description="Interaction with DNA" evidence="2">
    <location>
        <position position="171"/>
    </location>
</feature>
<feature type="site" description="Interaction with DNA" evidence="2">
    <location>
        <position position="325"/>
    </location>
</feature>
<feature type="site" description="Interaction with DNA" evidence="2">
    <location>
        <position position="529"/>
    </location>
</feature>
<feature type="sequence conflict" description="In Ref. 2; CAA78484." evidence="5" ref="2">
    <original>Q</original>
    <variation>H</variation>
    <location>
        <position position="126"/>
    </location>
</feature>
<feature type="sequence conflict" description="In Ref. 2; CAA78484." evidence="5" ref="2">
    <original>T</original>
    <variation>F</variation>
    <location>
        <position position="142"/>
    </location>
</feature>
<feature type="sequence conflict" description="In Ref. 2; CAA78484." evidence="5" ref="2">
    <original>I</original>
    <variation>L</variation>
    <location>
        <position position="218"/>
    </location>
</feature>
<feature type="sequence conflict" description="In Ref. 2; CAA78484." evidence="5" ref="2">
    <original>K</original>
    <variation>T</variation>
    <location>
        <position position="254"/>
    </location>
</feature>
<feature type="sequence conflict" description="In Ref. 2; CAA78484." evidence="5" ref="2">
    <original>A</original>
    <variation>D</variation>
    <location>
        <position position="258"/>
    </location>
</feature>
<feature type="sequence conflict" description="In Ref. 2; CAA78485." evidence="5" ref="2">
    <original>F</original>
    <variation>S</variation>
    <location>
        <position position="352"/>
    </location>
</feature>
<feature type="sequence conflict" description="In Ref. 2; CAA78485." evidence="5" ref="2">
    <original>W</original>
    <variation>R</variation>
    <location>
        <position position="443"/>
    </location>
</feature>
<feature type="sequence conflict" description="In Ref. 2; CAA78485." evidence="5" ref="2">
    <original>IT</original>
    <variation>TH</variation>
    <location>
        <begin position="523"/>
        <end position="524"/>
    </location>
</feature>
<feature type="sequence conflict" description="In Ref. 2; CAA78485." evidence="5" ref="2">
    <original>V</original>
    <variation>A</variation>
    <location>
        <position position="548"/>
    </location>
</feature>
<organism>
    <name type="scientific">Alkalihalophilus pseudofirmus (strain ATCC BAA-2126 / JCM 17055 / OF4)</name>
    <name type="common">Bacillus pseudofirmus</name>
    <dbReference type="NCBI Taxonomy" id="398511"/>
    <lineage>
        <taxon>Bacteria</taxon>
        <taxon>Bacillati</taxon>
        <taxon>Bacillota</taxon>
        <taxon>Bacilli</taxon>
        <taxon>Bacillales</taxon>
        <taxon>Bacillaceae</taxon>
        <taxon>Alkalihalophilus</taxon>
    </lineage>
</organism>
<keyword id="KW-0238">DNA-binding</keyword>
<keyword id="KW-0413">Isomerase</keyword>
<keyword id="KW-0614">Plasmid</keyword>
<keyword id="KW-1185">Reference proteome</keyword>
<keyword id="KW-1159">RNA suppression of termination</keyword>
<keyword id="KW-0799">Topoisomerase</keyword>
<accession>P34184</accession>
<accession>D3G1M5</accession>
<accession>D3G1M6</accession>
<reference key="1">
    <citation type="journal article" date="2011" name="Environ. Microbiol.">
        <title>Genome of alkaliphilic Bacillus pseudofirmus OF4 reveals adaptations that support the ability to grow in an external pH range from 7.5 to 11.4.</title>
        <authorList>
            <person name="Janto B."/>
            <person name="Ahmed A."/>
            <person name="Ito M."/>
            <person name="Liu J."/>
            <person name="Hicks D.B."/>
            <person name="Pagni S."/>
            <person name="Fackelmayer O.J."/>
            <person name="Smith T.A."/>
            <person name="Earl J."/>
            <person name="Elbourne L.D."/>
            <person name="Hassan K."/>
            <person name="Paulsen I.T."/>
            <person name="Kolsto A.B."/>
            <person name="Tourasse N.J."/>
            <person name="Ehrlich G.D."/>
            <person name="Boissy R."/>
            <person name="Ivey D.M."/>
            <person name="Li G."/>
            <person name="Xue Y."/>
            <person name="Ma Y."/>
            <person name="Hu F.Z."/>
            <person name="Krulwich T.A."/>
        </authorList>
    </citation>
    <scope>NUCLEOTIDE SEQUENCE [LARGE SCALE GENOMIC DNA]</scope>
    <source>
        <strain>ATCC BAA-2126 / JCM 17055 / OF4</strain>
        <plasmid>pBpOF4-01</plasmid>
    </source>
</reference>
<reference key="2">
    <citation type="journal article" date="1992" name="Nucleic Acids Res.">
        <title>A 1.6 kb region of Bacillus firmus OF4 DNA encodes a homolog of Escherichia coli and yeast DNA topoisomerases and may contain a translational readthrough of UGA.</title>
        <authorList>
            <person name="Ivey D.M."/>
            <person name="Cheng J."/>
            <person name="Krulwich T.A."/>
        </authorList>
    </citation>
    <scope>NUCLEOTIDE SEQUENCE [GENOMIC DNA] OF 27-706</scope>
</reference>
<proteinExistence type="inferred from homology"/>
<name>TOP1_ALKPO</name>
<comment type="function">
    <text evidence="1">Releases the supercoiling and torsional tension of DNA, which is introduced during the DNA replication and transcription, by transiently cleaving and rejoining one strand of the DNA duplex. Introduces a single-strand break via transesterification at a target site in duplex DNA. The scissile phosphodiester is attacked by the catalytic tyrosine of the enzyme, resulting in the formation of a DNA-(5'-phosphotyrosyl)-enzyme intermediate and the expulsion of a 3'-OH DNA strand. The free DNA strand then undergoes passage around the unbroken strand, thus removing DNA supercoils. Finally, in the religation step, the DNA 3'-OH attacks the covalent intermediate to expel the active-site tyrosine and restore the DNA phosphodiester backbone (By similarity).</text>
</comment>
<comment type="catalytic activity">
    <reaction evidence="4">
        <text>ATP-independent breakage of single-stranded DNA, followed by passage and rejoining.</text>
        <dbReference type="EC" id="5.6.2.1"/>
    </reaction>
</comment>
<comment type="subunit">
    <text evidence="1">Monomer.</text>
</comment>
<comment type="similarity">
    <text evidence="3 5">Belongs to the type IA topoisomerase family.</text>
</comment>
<comment type="caution">
    <text evidence="5">The sequence displayed is the result of a readthrough of the terminator UGA between codons for Tyr-288 and Leu-290. However, translational readthrough of UGA in this protein has not been proven.</text>
</comment>
<comment type="sequence caution" evidence="5">
    <conflict type="miscellaneous discrepancy">
        <sequence resource="EMBL-CDS" id="ADC52251"/>
    </conflict>
    <text>Probable readthrough of the stop codon.</text>
</comment>
<comment type="sequence caution" evidence="5">
    <conflict type="erroneous initiation">
        <sequence resource="EMBL-CDS" id="ADC52252"/>
    </conflict>
    <text>Truncated N-terminus.</text>
</comment>
<comment type="sequence caution" evidence="5">
    <conflict type="miscellaneous discrepancy">
        <sequence resource="EMBL-CDS" id="CAA78484"/>
    </conflict>
    <text>Probable readthrough of the stop codon.</text>
</comment>
<comment type="sequence caution" evidence="5">
    <conflict type="erroneous initiation">
        <sequence resource="EMBL-CDS" id="CAA78485"/>
    </conflict>
    <text>Truncated N-terminus.</text>
</comment>
<comment type="sequence caution" evidence="5">
    <conflict type="frameshift">
        <sequence resource="EMBL-CDS" id="CAA78485"/>
    </conflict>
</comment>
<protein>
    <recommendedName>
        <fullName>DNA topoisomerase 1</fullName>
        <ecNumber evidence="4">5.6.2.1</ecNumber>
    </recommendedName>
    <alternativeName>
        <fullName>DNA topoisomerase I</fullName>
    </alternativeName>
    <alternativeName>
        <fullName>Omega-protein</fullName>
    </alternativeName>
    <alternativeName>
        <fullName>Relaxing enzyme</fullName>
    </alternativeName>
    <alternativeName>
        <fullName>Swivelase</fullName>
    </alternativeName>
    <alternativeName>
        <fullName>Untwisting enzyme</fullName>
    </alternativeName>
</protein>
<gene>
    <name type="primary">topA</name>
    <name type="ordered locus">BpOF4_21279/BpOF4_21284</name>
</gene>